<reference key="1">
    <citation type="journal article" date="1990" name="FEBS Lett.">
        <title>Comparison of the gamma-crystallins isolated from eye lenses of shark and carp. Unique secondary and tertiary structure of shark gamma-crystallin.</title>
        <authorList>
            <person name="Chiou S.-H."/>
            <person name="Chen S.-W."/>
            <person name="Itoh T."/>
            <person name="Kaji H."/>
            <person name="Samejima T."/>
        </authorList>
    </citation>
    <scope>PROTEIN SEQUENCE</scope>
    <source>
        <tissue>Lens</tissue>
    </source>
</reference>
<keyword id="KW-0903">Direct protein sequencing</keyword>
<keyword id="KW-0273">Eye lens protein</keyword>
<keyword id="KW-0677">Repeat</keyword>
<comment type="function">
    <text>Crystallins are the dominant structural components of the vertebrate eye lens.</text>
</comment>
<comment type="subunit">
    <text evidence="1">Monomer.</text>
</comment>
<comment type="domain">
    <text>Has a two-domain beta-structure, folded into four very similar Greek key motifs.</text>
</comment>
<comment type="similarity">
    <text evidence="3">Belongs to the beta/gamma-crystallin family.</text>
</comment>
<feature type="chain" id="PRO_0000057579" description="Gamma-II crystallin">
    <location>
        <begin position="1"/>
        <end position="30" status="greater than"/>
    </location>
</feature>
<feature type="domain" description="Beta/gamma crystallin 'Greek key'" evidence="2">
    <location>
        <begin position="1"/>
        <end position="30" status="greater than"/>
    </location>
</feature>
<feature type="non-terminal residue">
    <location>
        <position position="30"/>
    </location>
</feature>
<dbReference type="SMR" id="P19865"/>
<dbReference type="GO" id="GO:0005212">
    <property type="term" value="F:structural constituent of eye lens"/>
    <property type="evidence" value="ECO:0007669"/>
    <property type="project" value="UniProtKB-KW"/>
</dbReference>
<dbReference type="GO" id="GO:0002088">
    <property type="term" value="P:lens development in camera-type eye"/>
    <property type="evidence" value="ECO:0007669"/>
    <property type="project" value="TreeGrafter"/>
</dbReference>
<dbReference type="GO" id="GO:0007601">
    <property type="term" value="P:visual perception"/>
    <property type="evidence" value="ECO:0007669"/>
    <property type="project" value="TreeGrafter"/>
</dbReference>
<dbReference type="Gene3D" id="2.60.20.10">
    <property type="entry name" value="Crystallins"/>
    <property type="match status" value="1"/>
</dbReference>
<dbReference type="InterPro" id="IPR050252">
    <property type="entry name" value="Beta/Gamma-Crystallin"/>
</dbReference>
<dbReference type="InterPro" id="IPR001064">
    <property type="entry name" value="Beta/gamma_crystallin"/>
</dbReference>
<dbReference type="InterPro" id="IPR011024">
    <property type="entry name" value="G_crystallin-like"/>
</dbReference>
<dbReference type="PANTHER" id="PTHR11818">
    <property type="entry name" value="BETA/GAMMA CRYSTALLIN"/>
    <property type="match status" value="1"/>
</dbReference>
<dbReference type="PANTHER" id="PTHR11818:SF119">
    <property type="entry name" value="GAMMA-CRYSTALLIN D"/>
    <property type="match status" value="1"/>
</dbReference>
<dbReference type="Pfam" id="PF00030">
    <property type="entry name" value="Crystall"/>
    <property type="match status" value="1"/>
</dbReference>
<dbReference type="SUPFAM" id="SSF49695">
    <property type="entry name" value="gamma-Crystallin-like"/>
    <property type="match status" value="1"/>
</dbReference>
<dbReference type="PROSITE" id="PS50915">
    <property type="entry name" value="CRYSTALLIN_BETA_GAMMA"/>
    <property type="match status" value="1"/>
</dbReference>
<accession>P19865</accession>
<protein>
    <recommendedName>
        <fullName>Gamma-II crystallin</fullName>
    </recommendedName>
</protein>
<proteinExistence type="evidence at protein level"/>
<organism>
    <name type="scientific">Rhizoprionodon acutus</name>
    <name type="common">Milk shark</name>
    <name type="synonym">Scoliodon walbeemii</name>
    <dbReference type="NCBI Taxonomy" id="34770"/>
    <lineage>
        <taxon>Eukaryota</taxon>
        <taxon>Metazoa</taxon>
        <taxon>Chordata</taxon>
        <taxon>Craniata</taxon>
        <taxon>Vertebrata</taxon>
        <taxon>Chondrichthyes</taxon>
        <taxon>Elasmobranchii</taxon>
        <taxon>Galeomorphii</taxon>
        <taxon>Galeoidea</taxon>
        <taxon>Carcharhiniformes</taxon>
        <taxon>Carcharhinidae</taxon>
        <taxon>Rhizoprionodon</taxon>
    </lineage>
</organism>
<evidence type="ECO:0000250" key="1"/>
<evidence type="ECO:0000255" key="2">
    <source>
        <dbReference type="PROSITE-ProRule" id="PRU00028"/>
    </source>
</evidence>
<evidence type="ECO:0000305" key="3"/>
<name>CRG2_RHIAS</name>
<sequence>GKITFYEDRNFQGRCYECSTDCPDLSPYFS</sequence>